<gene>
    <name evidence="10" type="primary">IL36A</name>
    <name type="synonym">FIL1E</name>
    <name type="synonym">IL1E</name>
    <name type="synonym">IL1F6</name>
</gene>
<organism>
    <name type="scientific">Homo sapiens</name>
    <name type="common">Human</name>
    <dbReference type="NCBI Taxonomy" id="9606"/>
    <lineage>
        <taxon>Eukaryota</taxon>
        <taxon>Metazoa</taxon>
        <taxon>Chordata</taxon>
        <taxon>Craniata</taxon>
        <taxon>Vertebrata</taxon>
        <taxon>Euteleostomi</taxon>
        <taxon>Mammalia</taxon>
        <taxon>Eutheria</taxon>
        <taxon>Euarchontoglires</taxon>
        <taxon>Primates</taxon>
        <taxon>Haplorrhini</taxon>
        <taxon>Catarrhini</taxon>
        <taxon>Hominidae</taxon>
        <taxon>Homo</taxon>
    </lineage>
</organism>
<name>IL36A_HUMAN</name>
<dbReference type="EMBL" id="AF201831">
    <property type="protein sequence ID" value="AAF25211.1"/>
    <property type="molecule type" value="mRNA"/>
</dbReference>
<dbReference type="EMBL" id="BN000002">
    <property type="protein sequence ID" value="CAD29875.1"/>
    <property type="molecule type" value="Genomic_DNA"/>
</dbReference>
<dbReference type="EMBL" id="AK314149">
    <property type="protein sequence ID" value="BAG36836.1"/>
    <property type="molecule type" value="mRNA"/>
</dbReference>
<dbReference type="EMBL" id="AY944686">
    <property type="protein sequence ID" value="AAX20113.1"/>
    <property type="molecule type" value="Genomic_DNA"/>
</dbReference>
<dbReference type="EMBL" id="AC016724">
    <property type="protein sequence ID" value="AAY14988.1"/>
    <property type="molecule type" value="Genomic_DNA"/>
</dbReference>
<dbReference type="EMBL" id="BC107042">
    <property type="protein sequence ID" value="AAI07043.1"/>
    <property type="molecule type" value="mRNA"/>
</dbReference>
<dbReference type="EMBL" id="BC107043">
    <property type="protein sequence ID" value="AAI07044.1"/>
    <property type="molecule type" value="mRNA"/>
</dbReference>
<dbReference type="CCDS" id="CCDS42734.1"/>
<dbReference type="RefSeq" id="NP_055255.1">
    <property type="nucleotide sequence ID" value="NM_014440.3"/>
</dbReference>
<dbReference type="RefSeq" id="XP_005263696.1">
    <property type="nucleotide sequence ID" value="XM_005263639.3"/>
</dbReference>
<dbReference type="RefSeq" id="XP_011509267.1">
    <property type="nucleotide sequence ID" value="XM_011510965.2"/>
</dbReference>
<dbReference type="RefSeq" id="XP_016859295.1">
    <property type="nucleotide sequence ID" value="XM_017003806.2"/>
</dbReference>
<dbReference type="PDB" id="6HPI">
    <property type="method" value="NMR"/>
    <property type="chains" value="A=1-158"/>
</dbReference>
<dbReference type="PDBsum" id="6HPI"/>
<dbReference type="SMR" id="Q9UHA7"/>
<dbReference type="BioGRID" id="118055">
    <property type="interactions" value="36"/>
</dbReference>
<dbReference type="ComplexPortal" id="CPX-10338">
    <property type="entry name" value="Interleukin-36A receptor ligand complex"/>
</dbReference>
<dbReference type="CORUM" id="Q9UHA7"/>
<dbReference type="FunCoup" id="Q9UHA7">
    <property type="interactions" value="344"/>
</dbReference>
<dbReference type="IntAct" id="Q9UHA7">
    <property type="interactions" value="20"/>
</dbReference>
<dbReference type="MINT" id="Q9UHA7"/>
<dbReference type="STRING" id="9606.ENSP00000259211"/>
<dbReference type="iPTMnet" id="Q9UHA7"/>
<dbReference type="PhosphoSitePlus" id="Q9UHA7"/>
<dbReference type="BioMuta" id="IL36A"/>
<dbReference type="DMDM" id="25008601"/>
<dbReference type="jPOST" id="Q9UHA7"/>
<dbReference type="MassIVE" id="Q9UHA7"/>
<dbReference type="PaxDb" id="9606-ENSP00000259211"/>
<dbReference type="PeptideAtlas" id="Q9UHA7"/>
<dbReference type="PRIDE" id="Q9UHA7"/>
<dbReference type="ProteomicsDB" id="84293"/>
<dbReference type="Antibodypedia" id="33315">
    <property type="antibodies" value="350 antibodies from 32 providers"/>
</dbReference>
<dbReference type="DNASU" id="27179"/>
<dbReference type="Ensembl" id="ENST00000259211.7">
    <property type="protein sequence ID" value="ENSP00000259211.6"/>
    <property type="gene ID" value="ENSG00000136694.9"/>
</dbReference>
<dbReference type="GeneID" id="27179"/>
<dbReference type="KEGG" id="hsa:27179"/>
<dbReference type="MANE-Select" id="ENST00000259211.7">
    <property type="protein sequence ID" value="ENSP00000259211.6"/>
    <property type="RefSeq nucleotide sequence ID" value="NM_014440.3"/>
    <property type="RefSeq protein sequence ID" value="NP_055255.1"/>
</dbReference>
<dbReference type="UCSC" id="uc010yxr.3">
    <property type="organism name" value="human"/>
</dbReference>
<dbReference type="AGR" id="HGNC:15562"/>
<dbReference type="CTD" id="27179"/>
<dbReference type="DisGeNET" id="27179"/>
<dbReference type="GeneCards" id="IL36A"/>
<dbReference type="HGNC" id="HGNC:15562">
    <property type="gene designation" value="IL36A"/>
</dbReference>
<dbReference type="HPA" id="ENSG00000136694">
    <property type="expression patterns" value="Group enriched (esophagus, lymphoid tissue)"/>
</dbReference>
<dbReference type="MIM" id="605509">
    <property type="type" value="gene"/>
</dbReference>
<dbReference type="neXtProt" id="NX_Q9UHA7"/>
<dbReference type="OpenTargets" id="ENSG00000136694"/>
<dbReference type="PharmGKB" id="PA38389"/>
<dbReference type="VEuPathDB" id="HostDB:ENSG00000136694"/>
<dbReference type="eggNOG" id="ENOG502TDU1">
    <property type="taxonomic scope" value="Eukaryota"/>
</dbReference>
<dbReference type="GeneTree" id="ENSGT00950000182943"/>
<dbReference type="HOGENOM" id="CLU_095373_1_0_1"/>
<dbReference type="InParanoid" id="Q9UHA7"/>
<dbReference type="OMA" id="QNIMDLY"/>
<dbReference type="OrthoDB" id="9449069at2759"/>
<dbReference type="PAN-GO" id="Q9UHA7">
    <property type="GO annotations" value="6 GO annotations based on evolutionary models"/>
</dbReference>
<dbReference type="PhylomeDB" id="Q9UHA7"/>
<dbReference type="TreeFam" id="TF300203"/>
<dbReference type="PathwayCommons" id="Q9UHA7"/>
<dbReference type="Reactome" id="R-HSA-9014826">
    <property type="pathway name" value="Interleukin-36 pathway"/>
</dbReference>
<dbReference type="SignaLink" id="Q9UHA7"/>
<dbReference type="BioGRID-ORCS" id="27179">
    <property type="hits" value="11 hits in 1136 CRISPR screens"/>
</dbReference>
<dbReference type="GeneWiki" id="IL1F6"/>
<dbReference type="GenomeRNAi" id="27179"/>
<dbReference type="Pharos" id="Q9UHA7">
    <property type="development level" value="Tbio"/>
</dbReference>
<dbReference type="PRO" id="PR:Q9UHA7"/>
<dbReference type="Proteomes" id="UP000005640">
    <property type="component" value="Chromosome 2"/>
</dbReference>
<dbReference type="RNAct" id="Q9UHA7">
    <property type="molecule type" value="protein"/>
</dbReference>
<dbReference type="Bgee" id="ENSG00000136694">
    <property type="expression patterns" value="Expressed in lower esophagus mucosa and 73 other cell types or tissues"/>
</dbReference>
<dbReference type="GO" id="GO:0005737">
    <property type="term" value="C:cytoplasm"/>
    <property type="evidence" value="ECO:0007669"/>
    <property type="project" value="UniProtKB-SubCell"/>
</dbReference>
<dbReference type="GO" id="GO:0005576">
    <property type="term" value="C:extracellular region"/>
    <property type="evidence" value="ECO:0000304"/>
    <property type="project" value="Reactome"/>
</dbReference>
<dbReference type="GO" id="GO:0005615">
    <property type="term" value="C:extracellular space"/>
    <property type="evidence" value="ECO:0000318"/>
    <property type="project" value="GO_Central"/>
</dbReference>
<dbReference type="GO" id="GO:0005125">
    <property type="term" value="F:cytokine activity"/>
    <property type="evidence" value="ECO:0000318"/>
    <property type="project" value="GO_Central"/>
</dbReference>
<dbReference type="GO" id="GO:0005149">
    <property type="term" value="F:interleukin-1 receptor binding"/>
    <property type="evidence" value="ECO:0000303"/>
    <property type="project" value="UniProtKB"/>
</dbReference>
<dbReference type="GO" id="GO:0071222">
    <property type="term" value="P:cellular response to lipopolysaccharide"/>
    <property type="evidence" value="ECO:0000318"/>
    <property type="project" value="GO_Central"/>
</dbReference>
<dbReference type="GO" id="GO:0019221">
    <property type="term" value="P:cytokine-mediated signaling pathway"/>
    <property type="evidence" value="ECO:0000318"/>
    <property type="project" value="GO_Central"/>
</dbReference>
<dbReference type="GO" id="GO:0006955">
    <property type="term" value="P:immune response"/>
    <property type="evidence" value="ECO:0000318"/>
    <property type="project" value="GO_Central"/>
</dbReference>
<dbReference type="GO" id="GO:0006954">
    <property type="term" value="P:inflammatory response"/>
    <property type="evidence" value="ECO:0000318"/>
    <property type="project" value="GO_Central"/>
</dbReference>
<dbReference type="GO" id="GO:0045087">
    <property type="term" value="P:innate immune response"/>
    <property type="evidence" value="ECO:0007669"/>
    <property type="project" value="UniProtKB-KW"/>
</dbReference>
<dbReference type="GO" id="GO:0032755">
    <property type="term" value="P:positive regulation of interleukin-6 production"/>
    <property type="evidence" value="ECO:0007669"/>
    <property type="project" value="Ensembl"/>
</dbReference>
<dbReference type="CDD" id="cd23300">
    <property type="entry name" value="beta-trefoil_IL36"/>
    <property type="match status" value="1"/>
</dbReference>
<dbReference type="FunFam" id="2.80.10.50:FF:000013">
    <property type="entry name" value="Interleukin-1"/>
    <property type="match status" value="1"/>
</dbReference>
<dbReference type="Gene3D" id="2.80.10.50">
    <property type="match status" value="1"/>
</dbReference>
<dbReference type="InterPro" id="IPR000975">
    <property type="entry name" value="IL-1_fam"/>
</dbReference>
<dbReference type="InterPro" id="IPR008996">
    <property type="entry name" value="IL1/FGF"/>
</dbReference>
<dbReference type="PANTHER" id="PTHR10078">
    <property type="entry name" value="INTERLEUKIN-1 FAMILY MEMBER"/>
    <property type="match status" value="1"/>
</dbReference>
<dbReference type="PANTHER" id="PTHR10078:SF25">
    <property type="entry name" value="INTERLEUKIN-36 ALPHA"/>
    <property type="match status" value="1"/>
</dbReference>
<dbReference type="Pfam" id="PF00340">
    <property type="entry name" value="IL1"/>
    <property type="match status" value="1"/>
</dbReference>
<dbReference type="PRINTS" id="PR00264">
    <property type="entry name" value="INTERLEUKIN1"/>
</dbReference>
<dbReference type="PRINTS" id="PR01359">
    <property type="entry name" value="INTRLEUKIN1B"/>
</dbReference>
<dbReference type="PRINTS" id="PR01357">
    <property type="entry name" value="INTRLEUKN1AB"/>
</dbReference>
<dbReference type="SMART" id="SM00125">
    <property type="entry name" value="IL1"/>
    <property type="match status" value="1"/>
</dbReference>
<dbReference type="SUPFAM" id="SSF50353">
    <property type="entry name" value="Cytokine"/>
    <property type="match status" value="1"/>
</dbReference>
<reference key="1">
    <citation type="journal article" date="2000" name="J. Biol. Chem.">
        <title>Four new members expand the IL-1 superfamily.</title>
        <authorList>
            <person name="Smith D.E."/>
            <person name="Renshaw B.R."/>
            <person name="Ketchem R.R."/>
            <person name="Kubin M."/>
            <person name="Garka K.E."/>
            <person name="Sims J.E."/>
        </authorList>
    </citation>
    <scope>NUCLEOTIDE SEQUENCE [MRNA]</scope>
</reference>
<reference key="2">
    <citation type="journal article" date="2002" name="Genomics">
        <title>A sequence-based map of the nine genes of the human interleukin-1 cluster.</title>
        <authorList>
            <person name="Nicklin M.J.H."/>
            <person name="Barton J.L."/>
            <person name="Nguyen M."/>
            <person name="Fitzgerald M.G."/>
            <person name="Duff W.G."/>
            <person name="Kornman K."/>
        </authorList>
    </citation>
    <scope>NUCLEOTIDE SEQUENCE [GENOMIC DNA]</scope>
</reference>
<reference key="3">
    <citation type="journal article" date="2004" name="Nat. Genet.">
        <title>Complete sequencing and characterization of 21,243 full-length human cDNAs.</title>
        <authorList>
            <person name="Ota T."/>
            <person name="Suzuki Y."/>
            <person name="Nishikawa T."/>
            <person name="Otsuki T."/>
            <person name="Sugiyama T."/>
            <person name="Irie R."/>
            <person name="Wakamatsu A."/>
            <person name="Hayashi K."/>
            <person name="Sato H."/>
            <person name="Nagai K."/>
            <person name="Kimura K."/>
            <person name="Makita H."/>
            <person name="Sekine M."/>
            <person name="Obayashi M."/>
            <person name="Nishi T."/>
            <person name="Shibahara T."/>
            <person name="Tanaka T."/>
            <person name="Ishii S."/>
            <person name="Yamamoto J."/>
            <person name="Saito K."/>
            <person name="Kawai Y."/>
            <person name="Isono Y."/>
            <person name="Nakamura Y."/>
            <person name="Nagahari K."/>
            <person name="Murakami K."/>
            <person name="Yasuda T."/>
            <person name="Iwayanagi T."/>
            <person name="Wagatsuma M."/>
            <person name="Shiratori A."/>
            <person name="Sudo H."/>
            <person name="Hosoiri T."/>
            <person name="Kaku Y."/>
            <person name="Kodaira H."/>
            <person name="Kondo H."/>
            <person name="Sugawara M."/>
            <person name="Takahashi M."/>
            <person name="Kanda K."/>
            <person name="Yokoi T."/>
            <person name="Furuya T."/>
            <person name="Kikkawa E."/>
            <person name="Omura Y."/>
            <person name="Abe K."/>
            <person name="Kamihara K."/>
            <person name="Katsuta N."/>
            <person name="Sato K."/>
            <person name="Tanikawa M."/>
            <person name="Yamazaki M."/>
            <person name="Ninomiya K."/>
            <person name="Ishibashi T."/>
            <person name="Yamashita H."/>
            <person name="Murakawa K."/>
            <person name="Fujimori K."/>
            <person name="Tanai H."/>
            <person name="Kimata M."/>
            <person name="Watanabe M."/>
            <person name="Hiraoka S."/>
            <person name="Chiba Y."/>
            <person name="Ishida S."/>
            <person name="Ono Y."/>
            <person name="Takiguchi S."/>
            <person name="Watanabe S."/>
            <person name="Yosida M."/>
            <person name="Hotuta T."/>
            <person name="Kusano J."/>
            <person name="Kanehori K."/>
            <person name="Takahashi-Fujii A."/>
            <person name="Hara H."/>
            <person name="Tanase T.-O."/>
            <person name="Nomura Y."/>
            <person name="Togiya S."/>
            <person name="Komai F."/>
            <person name="Hara R."/>
            <person name="Takeuchi K."/>
            <person name="Arita M."/>
            <person name="Imose N."/>
            <person name="Musashino K."/>
            <person name="Yuuki H."/>
            <person name="Oshima A."/>
            <person name="Sasaki N."/>
            <person name="Aotsuka S."/>
            <person name="Yoshikawa Y."/>
            <person name="Matsunawa H."/>
            <person name="Ichihara T."/>
            <person name="Shiohata N."/>
            <person name="Sano S."/>
            <person name="Moriya S."/>
            <person name="Momiyama H."/>
            <person name="Satoh N."/>
            <person name="Takami S."/>
            <person name="Terashima Y."/>
            <person name="Suzuki O."/>
            <person name="Nakagawa S."/>
            <person name="Senoh A."/>
            <person name="Mizoguchi H."/>
            <person name="Goto Y."/>
            <person name="Shimizu F."/>
            <person name="Wakebe H."/>
            <person name="Hishigaki H."/>
            <person name="Watanabe T."/>
            <person name="Sugiyama A."/>
            <person name="Takemoto M."/>
            <person name="Kawakami B."/>
            <person name="Yamazaki M."/>
            <person name="Watanabe K."/>
            <person name="Kumagai A."/>
            <person name="Itakura S."/>
            <person name="Fukuzumi Y."/>
            <person name="Fujimori Y."/>
            <person name="Komiyama M."/>
            <person name="Tashiro H."/>
            <person name="Tanigami A."/>
            <person name="Fujiwara T."/>
            <person name="Ono T."/>
            <person name="Yamada K."/>
            <person name="Fujii Y."/>
            <person name="Ozaki K."/>
            <person name="Hirao M."/>
            <person name="Ohmori Y."/>
            <person name="Kawabata A."/>
            <person name="Hikiji T."/>
            <person name="Kobatake N."/>
            <person name="Inagaki H."/>
            <person name="Ikema Y."/>
            <person name="Okamoto S."/>
            <person name="Okitani R."/>
            <person name="Kawakami T."/>
            <person name="Noguchi S."/>
            <person name="Itoh T."/>
            <person name="Shigeta K."/>
            <person name="Senba T."/>
            <person name="Matsumura K."/>
            <person name="Nakajima Y."/>
            <person name="Mizuno T."/>
            <person name="Morinaga M."/>
            <person name="Sasaki M."/>
            <person name="Togashi T."/>
            <person name="Oyama M."/>
            <person name="Hata H."/>
            <person name="Watanabe M."/>
            <person name="Komatsu T."/>
            <person name="Mizushima-Sugano J."/>
            <person name="Satoh T."/>
            <person name="Shirai Y."/>
            <person name="Takahashi Y."/>
            <person name="Nakagawa K."/>
            <person name="Okumura K."/>
            <person name="Nagase T."/>
            <person name="Nomura N."/>
            <person name="Kikuchi H."/>
            <person name="Masuho Y."/>
            <person name="Yamashita R."/>
            <person name="Nakai K."/>
            <person name="Yada T."/>
            <person name="Nakamura Y."/>
            <person name="Ohara O."/>
            <person name="Isogai T."/>
            <person name="Sugano S."/>
        </authorList>
    </citation>
    <scope>NUCLEOTIDE SEQUENCE [LARGE SCALE MRNA]</scope>
    <scope>VARIANT ARG-12</scope>
    <source>
        <tissue>Esophagus</tissue>
    </source>
</reference>
<reference key="4">
    <citation type="submission" date="2005-02" db="EMBL/GenBank/DDBJ databases">
        <authorList>
            <consortium name="SeattleSNPs variation discovery resource"/>
        </authorList>
    </citation>
    <scope>NUCLEOTIDE SEQUENCE [GENOMIC DNA]</scope>
    <scope>VARIANTS ARG-12; THR-63 AND ARG-134</scope>
</reference>
<reference key="5">
    <citation type="journal article" date="2005" name="Nature">
        <title>Generation and annotation of the DNA sequences of human chromosomes 2 and 4.</title>
        <authorList>
            <person name="Hillier L.W."/>
            <person name="Graves T.A."/>
            <person name="Fulton R.S."/>
            <person name="Fulton L.A."/>
            <person name="Pepin K.H."/>
            <person name="Minx P."/>
            <person name="Wagner-McPherson C."/>
            <person name="Layman D."/>
            <person name="Wylie K."/>
            <person name="Sekhon M."/>
            <person name="Becker M.C."/>
            <person name="Fewell G.A."/>
            <person name="Delehaunty K.D."/>
            <person name="Miner T.L."/>
            <person name="Nash W.E."/>
            <person name="Kremitzki C."/>
            <person name="Oddy L."/>
            <person name="Du H."/>
            <person name="Sun H."/>
            <person name="Bradshaw-Cordum H."/>
            <person name="Ali J."/>
            <person name="Carter J."/>
            <person name="Cordes M."/>
            <person name="Harris A."/>
            <person name="Isak A."/>
            <person name="van Brunt A."/>
            <person name="Nguyen C."/>
            <person name="Du F."/>
            <person name="Courtney L."/>
            <person name="Kalicki J."/>
            <person name="Ozersky P."/>
            <person name="Abbott S."/>
            <person name="Armstrong J."/>
            <person name="Belter E.A."/>
            <person name="Caruso L."/>
            <person name="Cedroni M."/>
            <person name="Cotton M."/>
            <person name="Davidson T."/>
            <person name="Desai A."/>
            <person name="Elliott G."/>
            <person name="Erb T."/>
            <person name="Fronick C."/>
            <person name="Gaige T."/>
            <person name="Haakenson W."/>
            <person name="Haglund K."/>
            <person name="Holmes A."/>
            <person name="Harkins R."/>
            <person name="Kim K."/>
            <person name="Kruchowski S.S."/>
            <person name="Strong C.M."/>
            <person name="Grewal N."/>
            <person name="Goyea E."/>
            <person name="Hou S."/>
            <person name="Levy A."/>
            <person name="Martinka S."/>
            <person name="Mead K."/>
            <person name="McLellan M.D."/>
            <person name="Meyer R."/>
            <person name="Randall-Maher J."/>
            <person name="Tomlinson C."/>
            <person name="Dauphin-Kohlberg S."/>
            <person name="Kozlowicz-Reilly A."/>
            <person name="Shah N."/>
            <person name="Swearengen-Shahid S."/>
            <person name="Snider J."/>
            <person name="Strong J.T."/>
            <person name="Thompson J."/>
            <person name="Yoakum M."/>
            <person name="Leonard S."/>
            <person name="Pearman C."/>
            <person name="Trani L."/>
            <person name="Radionenko M."/>
            <person name="Waligorski J.E."/>
            <person name="Wang C."/>
            <person name="Rock S.M."/>
            <person name="Tin-Wollam A.-M."/>
            <person name="Maupin R."/>
            <person name="Latreille P."/>
            <person name="Wendl M.C."/>
            <person name="Yang S.-P."/>
            <person name="Pohl C."/>
            <person name="Wallis J.W."/>
            <person name="Spieth J."/>
            <person name="Bieri T.A."/>
            <person name="Berkowicz N."/>
            <person name="Nelson J.O."/>
            <person name="Osborne J."/>
            <person name="Ding L."/>
            <person name="Meyer R."/>
            <person name="Sabo A."/>
            <person name="Shotland Y."/>
            <person name="Sinha P."/>
            <person name="Wohldmann P.E."/>
            <person name="Cook L.L."/>
            <person name="Hickenbotham M.T."/>
            <person name="Eldred J."/>
            <person name="Williams D."/>
            <person name="Jones T.A."/>
            <person name="She X."/>
            <person name="Ciccarelli F.D."/>
            <person name="Izaurralde E."/>
            <person name="Taylor J."/>
            <person name="Schmutz J."/>
            <person name="Myers R.M."/>
            <person name="Cox D.R."/>
            <person name="Huang X."/>
            <person name="McPherson J.D."/>
            <person name="Mardis E.R."/>
            <person name="Clifton S.W."/>
            <person name="Warren W.C."/>
            <person name="Chinwalla A.T."/>
            <person name="Eddy S.R."/>
            <person name="Marra M.A."/>
            <person name="Ovcharenko I."/>
            <person name="Furey T.S."/>
            <person name="Miller W."/>
            <person name="Eichler E.E."/>
            <person name="Bork P."/>
            <person name="Suyama M."/>
            <person name="Torrents D."/>
            <person name="Waterston R.H."/>
            <person name="Wilson R.K."/>
        </authorList>
    </citation>
    <scope>NUCLEOTIDE SEQUENCE [LARGE SCALE GENOMIC DNA]</scope>
</reference>
<reference key="6">
    <citation type="journal article" date="2004" name="Genome Res.">
        <title>The status, quality, and expansion of the NIH full-length cDNA project: the Mammalian Gene Collection (MGC).</title>
        <authorList>
            <consortium name="The MGC Project Team"/>
        </authorList>
    </citation>
    <scope>NUCLEOTIDE SEQUENCE [LARGE SCALE MRNA]</scope>
</reference>
<reference key="7">
    <citation type="journal article" date="2001" name="J. Immunol.">
        <title>Two novel IL-1 family members, IL-1 delta and IL-1 epsilon, function as an antagonist and agonist of NF-kappa B activation through the orphan IL-1 receptor-related protein 2.</title>
        <authorList>
            <person name="Debets R."/>
            <person name="Timans J.C."/>
            <person name="Homey B."/>
            <person name="Zurawski S."/>
            <person name="Sana T.R."/>
            <person name="Lo S."/>
            <person name="Wagner J."/>
            <person name="Edwards G."/>
            <person name="Clifford T."/>
            <person name="Menon S."/>
            <person name="Bazan J.F."/>
            <person name="Kastelein R.A."/>
        </authorList>
    </citation>
    <scope>TISSUE SPECIFICITY</scope>
    <scope>INDUCTION</scope>
</reference>
<reference key="8">
    <citation type="journal article" date="2004" name="J. Biol. Chem.">
        <title>Interleukin (IL)-1F6, IL-1F8, and IL-1F9 signal through IL-1Rrp2 and IL-1RAcP to activate the pathway leading to NF-kappaB and MAPKs.</title>
        <authorList>
            <person name="Towne J.E."/>
            <person name="Garka K.E."/>
            <person name="Renshaw B.R."/>
            <person name="Virca G.D."/>
            <person name="Sims J.E."/>
        </authorList>
    </citation>
    <scope>FUNCTION</scope>
</reference>
<reference key="9">
    <citation type="journal article" date="2006" name="Anal. Biochem.">
        <title>Nitroproteins from a human pituitary adenoma tissue discovered with a nitrotyrosine affinity column and tandem mass spectrometry.</title>
        <authorList>
            <person name="Zhan X."/>
            <person name="Desiderio D.M."/>
        </authorList>
    </citation>
    <scope>NITRATION [LARGE SCALE ANALYSIS] AT TYR-96</scope>
    <scope>IDENTIFICATION BY MASS SPECTROMETRY [LARGE SCALE ANALYSIS]</scope>
    <source>
        <tissue>Pituitary adenoma</tissue>
    </source>
</reference>
<reference key="10">
    <citation type="journal article" date="2011" name="J. Biol. Chem.">
        <title>Interleukin-36 (IL-36) ligands require processing for full agonist (IL-36alpha, IL-36beta, and IL-36gamma) or antagonist (IL-36Ra) activity.</title>
        <authorList>
            <person name="Towne J.E."/>
            <person name="Renshaw B.R."/>
            <person name="Douangpanya J."/>
            <person name="Lipsky B.P."/>
            <person name="Shen M."/>
            <person name="Gabel C.A."/>
            <person name="Sims J.E."/>
        </authorList>
    </citation>
    <scope>FUNCTION</scope>
    <scope>PROCESSING</scope>
</reference>
<reference key="11">
    <citation type="journal article" date="2011" name="J. Invest. Dermatol.">
        <title>Inter-regulation of Th17 cytokines and the IL-36 cytokines in vitro and in vivo: implications in psoriasis pathogenesis.</title>
        <authorList>
            <person name="Carrier Y."/>
            <person name="Ma H.L."/>
            <person name="Ramon H.E."/>
            <person name="Napierata L."/>
            <person name="Small C."/>
            <person name="O'Toole M."/>
            <person name="Young D.A."/>
            <person name="Fouser L.A."/>
            <person name="Nickerson-Nutter C."/>
            <person name="Collins M."/>
            <person name="Dunussi-Joannopoulos K."/>
            <person name="Medley Q.G."/>
        </authorList>
    </citation>
    <scope>FUNCTION</scope>
</reference>
<reference key="12">
    <citation type="journal article" date="2014" name="J. Immunol.">
        <title>IL-36 promotes myeloid cell infiltration, activation, and inflammatory activity in skin.</title>
        <authorList>
            <person name="Foster A.M."/>
            <person name="Baliwag J."/>
            <person name="Chen C.S."/>
            <person name="Guzman A.M."/>
            <person name="Stoll S.W."/>
            <person name="Gudjonsson J.E."/>
            <person name="Ward N.L."/>
            <person name="Johnston A."/>
        </authorList>
    </citation>
    <scope>FUNCTION</scope>
</reference>
<reference key="13">
    <citation type="journal article" date="2020" name="Cell">
        <title>A Translocation Pathway for Vesicle-Mediated Unconventional Protein Secretion.</title>
        <authorList>
            <person name="Zhang M."/>
            <person name="Liu L."/>
            <person name="Lin X."/>
            <person name="Wang Y."/>
            <person name="Li Y."/>
            <person name="Guo Q."/>
            <person name="Li S."/>
            <person name="Sun Y."/>
            <person name="Tao X."/>
            <person name="Zhang D."/>
            <person name="Lv X."/>
            <person name="Zheng L."/>
            <person name="Ge L."/>
        </authorList>
    </citation>
    <scope>SUBCELLULAR LOCATION</scope>
    <scope>INTERACTION WITH TMED10</scope>
</reference>
<accession>Q9UHA7</accession>
<accession>B2RAD9</accession>
<accession>Q53SR7</accession>
<accession>Q5BLR4</accession>
<accession>Q7RTZ8</accession>
<feature type="propeptide" id="PRO_0000430545" evidence="5">
    <location>
        <begin position="1"/>
        <end position="5"/>
    </location>
</feature>
<feature type="chain" id="PRO_0000153644" description="Interleukin-36 alpha">
    <location>
        <begin position="6"/>
        <end position="158"/>
    </location>
</feature>
<feature type="modified residue" description="3'-nitrotyrosine" evidence="11">
    <location>
        <position position="96"/>
    </location>
</feature>
<feature type="sequence variant" id="VAR_024504" description="In dbSNP:rs895497." evidence="2 8">
    <original>Q</original>
    <variation>R</variation>
    <location>
        <position position="12"/>
    </location>
</feature>
<feature type="sequence variant" id="VAR_025055" description="In dbSNP:rs28938798." evidence="8">
    <original>I</original>
    <variation>T</variation>
    <location>
        <position position="63"/>
    </location>
</feature>
<feature type="sequence variant" id="VAR_025056" description="In dbSNP:rs28947175." evidence="8">
    <original>G</original>
    <variation>R</variation>
    <location>
        <position position="134"/>
    </location>
</feature>
<feature type="strand" evidence="12">
    <location>
        <begin position="11"/>
        <end position="15"/>
    </location>
</feature>
<feature type="helix" evidence="12">
    <location>
        <begin position="16"/>
        <end position="18"/>
    </location>
</feature>
<feature type="strand" evidence="12">
    <location>
        <begin position="23"/>
        <end position="26"/>
    </location>
</feature>
<feature type="strand" evidence="12">
    <location>
        <begin position="29"/>
        <end position="32"/>
    </location>
</feature>
<feature type="strand" evidence="12">
    <location>
        <begin position="43"/>
        <end position="48"/>
    </location>
</feature>
<feature type="helix" evidence="12">
    <location>
        <begin position="52"/>
        <end position="54"/>
    </location>
</feature>
<feature type="strand" evidence="12">
    <location>
        <begin position="62"/>
        <end position="68"/>
    </location>
</feature>
<feature type="turn" evidence="12">
    <location>
        <begin position="69"/>
        <end position="71"/>
    </location>
</feature>
<feature type="strand" evidence="12">
    <location>
        <begin position="76"/>
        <end position="78"/>
    </location>
</feature>
<feature type="strand" evidence="12">
    <location>
        <begin position="80"/>
        <end position="85"/>
    </location>
</feature>
<feature type="helix" evidence="12">
    <location>
        <begin position="92"/>
        <end position="97"/>
    </location>
</feature>
<feature type="turn" evidence="12">
    <location>
        <begin position="103"/>
        <end position="105"/>
    </location>
</feature>
<feature type="strand" evidence="12">
    <location>
        <begin position="107"/>
        <end position="114"/>
    </location>
</feature>
<feature type="strand" evidence="12">
    <location>
        <begin position="116"/>
        <end position="123"/>
    </location>
</feature>
<feature type="strand" evidence="12">
    <location>
        <begin position="127"/>
        <end position="129"/>
    </location>
</feature>
<feature type="strand" evidence="12">
    <location>
        <begin position="139"/>
        <end position="142"/>
    </location>
</feature>
<feature type="strand" evidence="12">
    <location>
        <begin position="145"/>
        <end position="148"/>
    </location>
</feature>
<feature type="strand" evidence="12">
    <location>
        <begin position="155"/>
        <end position="157"/>
    </location>
</feature>
<sequence>MEKALKIDTPQQGSIQDINHRVWVLQDQTLIAVPRKDRMSPVTIALISCRHVETLEKDRGNPIYLGLNGLNLCLMCAKVGDQPTLQLKEKDIMDLYNQPEPVKSFLFYHSQSGRNSTFESVAFPGWFIAVSSEGGCPLILTQELGKANTTDFGLTMLF</sequence>
<evidence type="ECO:0000269" key="1">
    <source>
    </source>
</evidence>
<evidence type="ECO:0000269" key="2">
    <source>
    </source>
</evidence>
<evidence type="ECO:0000269" key="3">
    <source>
    </source>
</evidence>
<evidence type="ECO:0000269" key="4">
    <source>
    </source>
</evidence>
<evidence type="ECO:0000269" key="5">
    <source>
    </source>
</evidence>
<evidence type="ECO:0000269" key="6">
    <source>
    </source>
</evidence>
<evidence type="ECO:0000269" key="7">
    <source>
    </source>
</evidence>
<evidence type="ECO:0000269" key="8">
    <source ref="4"/>
</evidence>
<evidence type="ECO:0000305" key="9"/>
<evidence type="ECO:0000312" key="10">
    <source>
        <dbReference type="HGNC" id="HGNC:15562"/>
    </source>
</evidence>
<evidence type="ECO:0007744" key="11">
    <source>
    </source>
</evidence>
<evidence type="ECO:0007829" key="12">
    <source>
        <dbReference type="PDB" id="6HPI"/>
    </source>
</evidence>
<keyword id="KW-0002">3D-structure</keyword>
<keyword id="KW-0202">Cytokine</keyword>
<keyword id="KW-0963">Cytoplasm</keyword>
<keyword id="KW-0391">Immunity</keyword>
<keyword id="KW-0395">Inflammatory response</keyword>
<keyword id="KW-0399">Innate immunity</keyword>
<keyword id="KW-0944">Nitration</keyword>
<keyword id="KW-1267">Proteomics identification</keyword>
<keyword id="KW-1185">Reference proteome</keyword>
<keyword id="KW-0964">Secreted</keyword>
<proteinExistence type="evidence at protein level"/>
<protein>
    <recommendedName>
        <fullName>Interleukin-36 alpha</fullName>
    </recommendedName>
    <alternativeName>
        <fullName>FIL1 epsilon</fullName>
    </alternativeName>
    <alternativeName>
        <fullName>Interleukin-1 epsilon</fullName>
        <shortName>IL-1 epsilon</shortName>
    </alternativeName>
    <alternativeName>
        <fullName>Interleukin-1 family member 6</fullName>
        <shortName>IL-1F6</shortName>
    </alternativeName>
</protein>
<comment type="function">
    <text evidence="3 4 5 6">Cytokine that binds to and signals through the IL1RL2/IL-36R receptor which in turn activates NF-kappa-B and MAPK signaling pathways in target cells linked to a pro-inflammatory response. Part of the IL-36 signaling system that is thought to be present in epithelial barriers and to take part in local inflammatory response; similar to the IL-1 system with which it shares the coreceptor IL1RAP. Seems to be involved in skin inflammatory response by acting on keratinocytes, dendritic cells and indirectly on T-cells to drive tissue infiltration, cell maturation and cell proliferation. In cultured keratinocytes induces the expression of macrophage, T-cell, and neutrophil chemokines, such as CCL3, CCL4, CCL5, CCL2, CCL17, CCL22, CL20, CCL5, CCL2, CCL17, CCL22, CXCL8, CCL20 and CXCL1, and the production of pro-inflammatory cytokines such as TNF-alpha, IL-8 and IL-6. In cultured monocytes up-regulates expression of IL-1A, IL-1B and IL-6. In myeloid dendritic cells involved in cell maturation by up-regulating surface expression of CD83, CD86 and HLA-DR. In monocyte-derived dendritic cells facilitates dendritic cell maturation and drives T-cell proliferation. May play a role in pro-inflammatory effects in the lung.</text>
</comment>
<comment type="subunit">
    <text evidence="7">Interacts with TMED10; the interaction mediates the translocation from the cytoplasm into the ERGIC (endoplasmic reticulum-Golgi intermediate compartment) and thereby secretion.</text>
</comment>
<comment type="subcellular location">
    <subcellularLocation>
        <location evidence="7">Cytoplasm</location>
    </subcellularLocation>
    <subcellularLocation>
        <location evidence="7">Secreted</location>
    </subcellularLocation>
    <text evidence="7">The secretion is dependent on protein unfolding and facilitated by the cargo receptor TMED10; it results in protein translocation from the cytoplasm into the ERGIC (endoplasmic reticulum-Golgi intermediate compartment) followed by vesicle entry and secretion.</text>
</comment>
<comment type="tissue specificity">
    <text evidence="1">Expressed in immune system and fetal brain, but not in other tissues tested or in multiple hematopoietic cell lines. Predominantly expressed in skin keratinocytes but not in fibroblasts, endothelial cells or melanocytes. Increased in lesional psoriasis skin.</text>
</comment>
<comment type="induction">
    <text evidence="1">By Il-1 and TNF-alpha.</text>
</comment>
<comment type="PTM">
    <text evidence="5">N-terminal truncation leads to a dramatic enhancement of its activity (&gt;1000-fold).</text>
</comment>
<comment type="miscellaneous">
    <text evidence="3">Initial experiments using non-processed full-length protein found in vitro activity only in the ug range.</text>
</comment>
<comment type="similarity">
    <text evidence="9">Belongs to the IL-1 family.</text>
</comment>
<comment type="online information" name="Wikipedia">
    <link uri="https://en.wikipedia.org/wiki/Interleukin_1"/>
    <text>Interleukin-1 entry</text>
</comment>